<feature type="chain" id="PRO_0000381240" description="Biotin synthase">
    <location>
        <begin position="1"/>
        <end position="335"/>
    </location>
</feature>
<feature type="domain" description="Radical SAM core" evidence="2">
    <location>
        <begin position="51"/>
        <end position="278"/>
    </location>
</feature>
<feature type="binding site" evidence="1">
    <location>
        <position position="66"/>
    </location>
    <ligand>
        <name>[4Fe-4S] cluster</name>
        <dbReference type="ChEBI" id="CHEBI:49883"/>
        <note>4Fe-4S-S-AdoMet</note>
    </ligand>
</feature>
<feature type="binding site" evidence="1">
    <location>
        <position position="70"/>
    </location>
    <ligand>
        <name>[4Fe-4S] cluster</name>
        <dbReference type="ChEBI" id="CHEBI:49883"/>
        <note>4Fe-4S-S-AdoMet</note>
    </ligand>
</feature>
<feature type="binding site" evidence="1">
    <location>
        <position position="73"/>
    </location>
    <ligand>
        <name>[4Fe-4S] cluster</name>
        <dbReference type="ChEBI" id="CHEBI:49883"/>
        <note>4Fe-4S-S-AdoMet</note>
    </ligand>
</feature>
<feature type="binding site" evidence="1">
    <location>
        <position position="110"/>
    </location>
    <ligand>
        <name>[2Fe-2S] cluster</name>
        <dbReference type="ChEBI" id="CHEBI:190135"/>
    </ligand>
</feature>
<feature type="binding site" evidence="1">
    <location>
        <position position="141"/>
    </location>
    <ligand>
        <name>[2Fe-2S] cluster</name>
        <dbReference type="ChEBI" id="CHEBI:190135"/>
    </ligand>
</feature>
<feature type="binding site" evidence="1">
    <location>
        <position position="201"/>
    </location>
    <ligand>
        <name>[2Fe-2S] cluster</name>
        <dbReference type="ChEBI" id="CHEBI:190135"/>
    </ligand>
</feature>
<feature type="binding site" evidence="1">
    <location>
        <position position="273"/>
    </location>
    <ligand>
        <name>[2Fe-2S] cluster</name>
        <dbReference type="ChEBI" id="CHEBI:190135"/>
    </ligand>
</feature>
<dbReference type="EC" id="2.8.1.6" evidence="1"/>
<dbReference type="EMBL" id="BX640426">
    <property type="protein sequence ID" value="CAE36422.1"/>
    <property type="molecule type" value="Genomic_DNA"/>
</dbReference>
<dbReference type="RefSeq" id="WP_010926132.1">
    <property type="nucleotide sequence ID" value="NC_002928.3"/>
</dbReference>
<dbReference type="SMR" id="Q7WB85"/>
<dbReference type="GeneID" id="93202870"/>
<dbReference type="KEGG" id="bpa:BPP1121"/>
<dbReference type="HOGENOM" id="CLU_033172_1_2_4"/>
<dbReference type="UniPathway" id="UPA00078">
    <property type="reaction ID" value="UER00162"/>
</dbReference>
<dbReference type="Proteomes" id="UP000001421">
    <property type="component" value="Chromosome"/>
</dbReference>
<dbReference type="GO" id="GO:0051537">
    <property type="term" value="F:2 iron, 2 sulfur cluster binding"/>
    <property type="evidence" value="ECO:0007669"/>
    <property type="project" value="UniProtKB-KW"/>
</dbReference>
<dbReference type="GO" id="GO:0051539">
    <property type="term" value="F:4 iron, 4 sulfur cluster binding"/>
    <property type="evidence" value="ECO:0007669"/>
    <property type="project" value="UniProtKB-KW"/>
</dbReference>
<dbReference type="GO" id="GO:0004076">
    <property type="term" value="F:biotin synthase activity"/>
    <property type="evidence" value="ECO:0007669"/>
    <property type="project" value="UniProtKB-UniRule"/>
</dbReference>
<dbReference type="GO" id="GO:0005506">
    <property type="term" value="F:iron ion binding"/>
    <property type="evidence" value="ECO:0007669"/>
    <property type="project" value="UniProtKB-UniRule"/>
</dbReference>
<dbReference type="GO" id="GO:0009102">
    <property type="term" value="P:biotin biosynthetic process"/>
    <property type="evidence" value="ECO:0007669"/>
    <property type="project" value="UniProtKB-UniRule"/>
</dbReference>
<dbReference type="CDD" id="cd01335">
    <property type="entry name" value="Radical_SAM"/>
    <property type="match status" value="1"/>
</dbReference>
<dbReference type="FunFam" id="3.20.20.70:FF:000011">
    <property type="entry name" value="Biotin synthase"/>
    <property type="match status" value="1"/>
</dbReference>
<dbReference type="Gene3D" id="3.20.20.70">
    <property type="entry name" value="Aldolase class I"/>
    <property type="match status" value="1"/>
</dbReference>
<dbReference type="HAMAP" id="MF_01694">
    <property type="entry name" value="BioB"/>
    <property type="match status" value="1"/>
</dbReference>
<dbReference type="InterPro" id="IPR013785">
    <property type="entry name" value="Aldolase_TIM"/>
</dbReference>
<dbReference type="InterPro" id="IPR010722">
    <property type="entry name" value="BATS_dom"/>
</dbReference>
<dbReference type="InterPro" id="IPR002684">
    <property type="entry name" value="Biotin_synth/BioAB"/>
</dbReference>
<dbReference type="InterPro" id="IPR024177">
    <property type="entry name" value="Biotin_synthase"/>
</dbReference>
<dbReference type="InterPro" id="IPR006638">
    <property type="entry name" value="Elp3/MiaA/NifB-like_rSAM"/>
</dbReference>
<dbReference type="InterPro" id="IPR007197">
    <property type="entry name" value="rSAM"/>
</dbReference>
<dbReference type="NCBIfam" id="TIGR00433">
    <property type="entry name" value="bioB"/>
    <property type="match status" value="1"/>
</dbReference>
<dbReference type="PANTHER" id="PTHR22976">
    <property type="entry name" value="BIOTIN SYNTHASE"/>
    <property type="match status" value="1"/>
</dbReference>
<dbReference type="PANTHER" id="PTHR22976:SF2">
    <property type="entry name" value="BIOTIN SYNTHASE, MITOCHONDRIAL"/>
    <property type="match status" value="1"/>
</dbReference>
<dbReference type="Pfam" id="PF06968">
    <property type="entry name" value="BATS"/>
    <property type="match status" value="1"/>
</dbReference>
<dbReference type="Pfam" id="PF04055">
    <property type="entry name" value="Radical_SAM"/>
    <property type="match status" value="1"/>
</dbReference>
<dbReference type="PIRSF" id="PIRSF001619">
    <property type="entry name" value="Biotin_synth"/>
    <property type="match status" value="1"/>
</dbReference>
<dbReference type="SFLD" id="SFLDF00272">
    <property type="entry name" value="biotin_synthase"/>
    <property type="match status" value="1"/>
</dbReference>
<dbReference type="SFLD" id="SFLDS00029">
    <property type="entry name" value="Radical_SAM"/>
    <property type="match status" value="1"/>
</dbReference>
<dbReference type="SMART" id="SM00876">
    <property type="entry name" value="BATS"/>
    <property type="match status" value="1"/>
</dbReference>
<dbReference type="SMART" id="SM00729">
    <property type="entry name" value="Elp3"/>
    <property type="match status" value="1"/>
</dbReference>
<dbReference type="SUPFAM" id="SSF102114">
    <property type="entry name" value="Radical SAM enzymes"/>
    <property type="match status" value="1"/>
</dbReference>
<dbReference type="PROSITE" id="PS51918">
    <property type="entry name" value="RADICAL_SAM"/>
    <property type="match status" value="1"/>
</dbReference>
<proteinExistence type="inferred from homology"/>
<gene>
    <name evidence="1" type="primary">bioB</name>
    <name type="ordered locus">BPP1121</name>
</gene>
<organism>
    <name type="scientific">Bordetella parapertussis (strain 12822 / ATCC BAA-587 / NCTC 13253)</name>
    <dbReference type="NCBI Taxonomy" id="257311"/>
    <lineage>
        <taxon>Bacteria</taxon>
        <taxon>Pseudomonadati</taxon>
        <taxon>Pseudomonadota</taxon>
        <taxon>Betaproteobacteria</taxon>
        <taxon>Burkholderiales</taxon>
        <taxon>Alcaligenaceae</taxon>
        <taxon>Bordetella</taxon>
    </lineage>
</organism>
<reference key="1">
    <citation type="journal article" date="2003" name="Nat. Genet.">
        <title>Comparative analysis of the genome sequences of Bordetella pertussis, Bordetella parapertussis and Bordetella bronchiseptica.</title>
        <authorList>
            <person name="Parkhill J."/>
            <person name="Sebaihia M."/>
            <person name="Preston A."/>
            <person name="Murphy L.D."/>
            <person name="Thomson N.R."/>
            <person name="Harris D.E."/>
            <person name="Holden M.T.G."/>
            <person name="Churcher C.M."/>
            <person name="Bentley S.D."/>
            <person name="Mungall K.L."/>
            <person name="Cerdeno-Tarraga A.-M."/>
            <person name="Temple L."/>
            <person name="James K.D."/>
            <person name="Harris B."/>
            <person name="Quail M.A."/>
            <person name="Achtman M."/>
            <person name="Atkin R."/>
            <person name="Baker S."/>
            <person name="Basham D."/>
            <person name="Bason N."/>
            <person name="Cherevach I."/>
            <person name="Chillingworth T."/>
            <person name="Collins M."/>
            <person name="Cronin A."/>
            <person name="Davis P."/>
            <person name="Doggett J."/>
            <person name="Feltwell T."/>
            <person name="Goble A."/>
            <person name="Hamlin N."/>
            <person name="Hauser H."/>
            <person name="Holroyd S."/>
            <person name="Jagels K."/>
            <person name="Leather S."/>
            <person name="Moule S."/>
            <person name="Norberczak H."/>
            <person name="O'Neil S."/>
            <person name="Ormond D."/>
            <person name="Price C."/>
            <person name="Rabbinowitsch E."/>
            <person name="Rutter S."/>
            <person name="Sanders M."/>
            <person name="Saunders D."/>
            <person name="Seeger K."/>
            <person name="Sharp S."/>
            <person name="Simmonds M."/>
            <person name="Skelton J."/>
            <person name="Squares R."/>
            <person name="Squares S."/>
            <person name="Stevens K."/>
            <person name="Unwin L."/>
            <person name="Whitehead S."/>
            <person name="Barrell B.G."/>
            <person name="Maskell D.J."/>
        </authorList>
    </citation>
    <scope>NUCLEOTIDE SEQUENCE [LARGE SCALE GENOMIC DNA]</scope>
    <source>
        <strain>12822 / ATCC BAA-587 / NCTC 13253</strain>
    </source>
</reference>
<name>BIOB_BORPA</name>
<keyword id="KW-0001">2Fe-2S</keyword>
<keyword id="KW-0004">4Fe-4S</keyword>
<keyword id="KW-0093">Biotin biosynthesis</keyword>
<keyword id="KW-0408">Iron</keyword>
<keyword id="KW-0411">Iron-sulfur</keyword>
<keyword id="KW-0479">Metal-binding</keyword>
<keyword id="KW-0949">S-adenosyl-L-methionine</keyword>
<keyword id="KW-0808">Transferase</keyword>
<evidence type="ECO:0000255" key="1">
    <source>
        <dbReference type="HAMAP-Rule" id="MF_01694"/>
    </source>
</evidence>
<evidence type="ECO:0000255" key="2">
    <source>
        <dbReference type="PROSITE-ProRule" id="PRU01266"/>
    </source>
</evidence>
<protein>
    <recommendedName>
        <fullName evidence="1">Biotin synthase</fullName>
        <ecNumber evidence="1">2.8.1.6</ecNumber>
    </recommendedName>
</protein>
<sequence length="335" mass="36377">MHTAYIPVPTPVRPPSAERWPLAAVAELFELPFLDLLHRAQQVHRQHFDANTVQLSSLLSIKTGGCPEDCAYCPQSAHYDTGVDADKLMPLDEVVRAARAAQANGAQRFCMGAAWRSPKPHHLEAVAEMIGAVKALGMETCVTLGMLRDGQAEQLKAAGLDYYNHNLDTAPEFYGKIISTRTYQDRLDTLQQVREAGINVCCGGIVGMGESRRDRAGLVAQLANMEPYPESVPINNLVQVEGTPLAGAETLDPFEFIRTIAVARITMPLAKVRLSAGRETMSDSEQALCFMAGANSIFYGDVLLTTGNPQVEADRRLLQRLGMRAEGLPCAAGQA</sequence>
<accession>Q7WB85</accession>
<comment type="function">
    <text evidence="1">Catalyzes the conversion of dethiobiotin (DTB) to biotin by the insertion of a sulfur atom into dethiobiotin via a radical-based mechanism.</text>
</comment>
<comment type="catalytic activity">
    <reaction evidence="1">
        <text>(4R,5S)-dethiobiotin + (sulfur carrier)-SH + 2 reduced [2Fe-2S]-[ferredoxin] + 2 S-adenosyl-L-methionine = (sulfur carrier)-H + biotin + 2 5'-deoxyadenosine + 2 L-methionine + 2 oxidized [2Fe-2S]-[ferredoxin]</text>
        <dbReference type="Rhea" id="RHEA:22060"/>
        <dbReference type="Rhea" id="RHEA-COMP:10000"/>
        <dbReference type="Rhea" id="RHEA-COMP:10001"/>
        <dbReference type="Rhea" id="RHEA-COMP:14737"/>
        <dbReference type="Rhea" id="RHEA-COMP:14739"/>
        <dbReference type="ChEBI" id="CHEBI:17319"/>
        <dbReference type="ChEBI" id="CHEBI:29917"/>
        <dbReference type="ChEBI" id="CHEBI:33737"/>
        <dbReference type="ChEBI" id="CHEBI:33738"/>
        <dbReference type="ChEBI" id="CHEBI:57586"/>
        <dbReference type="ChEBI" id="CHEBI:57844"/>
        <dbReference type="ChEBI" id="CHEBI:59789"/>
        <dbReference type="ChEBI" id="CHEBI:64428"/>
        <dbReference type="ChEBI" id="CHEBI:149473"/>
        <dbReference type="EC" id="2.8.1.6"/>
    </reaction>
</comment>
<comment type="cofactor">
    <cofactor evidence="1">
        <name>[4Fe-4S] cluster</name>
        <dbReference type="ChEBI" id="CHEBI:49883"/>
    </cofactor>
    <text evidence="1">Binds 1 [4Fe-4S] cluster. The cluster is coordinated with 3 cysteines and an exchangeable S-adenosyl-L-methionine.</text>
</comment>
<comment type="cofactor">
    <cofactor evidence="1">
        <name>[2Fe-2S] cluster</name>
        <dbReference type="ChEBI" id="CHEBI:190135"/>
    </cofactor>
    <text evidence="1">Binds 1 [2Fe-2S] cluster. The cluster is coordinated with 3 cysteines and 1 arginine.</text>
</comment>
<comment type="pathway">
    <text evidence="1">Cofactor biosynthesis; biotin biosynthesis; biotin from 7,8-diaminononanoate: step 2/2.</text>
</comment>
<comment type="subunit">
    <text evidence="1">Homodimer.</text>
</comment>
<comment type="similarity">
    <text evidence="1">Belongs to the radical SAM superfamily. Biotin synthase family.</text>
</comment>